<evidence type="ECO:0000255" key="1"/>
<evidence type="ECO:0000269" key="2">
    <source>
    </source>
</evidence>
<evidence type="ECO:0000269" key="3">
    <source>
    </source>
</evidence>
<evidence type="ECO:0000269" key="4">
    <source>
    </source>
</evidence>
<evidence type="ECO:0000305" key="5"/>
<dbReference type="EMBL" id="CU329671">
    <property type="protein sequence ID" value="CAB16906.1"/>
    <property type="molecule type" value="Genomic_DNA"/>
</dbReference>
<dbReference type="PIR" id="T39588">
    <property type="entry name" value="T39588"/>
</dbReference>
<dbReference type="RefSeq" id="NP_595796.1">
    <property type="nucleotide sequence ID" value="NM_001021697.2"/>
</dbReference>
<dbReference type="SMR" id="O14329"/>
<dbReference type="BioGRID" id="276687">
    <property type="interactions" value="58"/>
</dbReference>
<dbReference type="FunCoup" id="O14329">
    <property type="interactions" value="13"/>
</dbReference>
<dbReference type="IntAct" id="O14329">
    <property type="interactions" value="1"/>
</dbReference>
<dbReference type="STRING" id="284812.O14329"/>
<dbReference type="iPTMnet" id="O14329"/>
<dbReference type="PaxDb" id="4896-SPBC16E9.14c.1"/>
<dbReference type="EnsemblFungi" id="SPBC16E9.14c.1">
    <property type="protein sequence ID" value="SPBC16E9.14c.1:pep"/>
    <property type="gene ID" value="SPBC16E9.14c"/>
</dbReference>
<dbReference type="GeneID" id="2540150"/>
<dbReference type="KEGG" id="spo:2540150"/>
<dbReference type="PomBase" id="SPBC16E9.14c">
    <property type="gene designation" value="zrg17"/>
</dbReference>
<dbReference type="VEuPathDB" id="FungiDB:SPBC16E9.14c"/>
<dbReference type="eggNOG" id="ENOG502QV77">
    <property type="taxonomic scope" value="Eukaryota"/>
</dbReference>
<dbReference type="HOGENOM" id="CLU_702407_0_0_1"/>
<dbReference type="InParanoid" id="O14329"/>
<dbReference type="OMA" id="KECRSSM"/>
<dbReference type="PhylomeDB" id="O14329"/>
<dbReference type="PRO" id="PR:O14329"/>
<dbReference type="Proteomes" id="UP000002485">
    <property type="component" value="Chromosome II"/>
</dbReference>
<dbReference type="GO" id="GO:0005829">
    <property type="term" value="C:cytosol"/>
    <property type="evidence" value="ECO:0007005"/>
    <property type="project" value="PomBase"/>
</dbReference>
<dbReference type="GO" id="GO:0000139">
    <property type="term" value="C:Golgi membrane"/>
    <property type="evidence" value="ECO:0000353"/>
    <property type="project" value="PomBase"/>
</dbReference>
<dbReference type="GO" id="GO:0031965">
    <property type="term" value="C:nuclear membrane"/>
    <property type="evidence" value="ECO:0007669"/>
    <property type="project" value="UniProtKB-SubCell"/>
</dbReference>
<dbReference type="GO" id="GO:0005385">
    <property type="term" value="F:zinc ion transmembrane transporter activity"/>
    <property type="evidence" value="ECO:0000316"/>
    <property type="project" value="PomBase"/>
</dbReference>
<dbReference type="GO" id="GO:0006882">
    <property type="term" value="P:intracellular zinc ion homeostasis"/>
    <property type="evidence" value="ECO:0000314"/>
    <property type="project" value="PomBase"/>
</dbReference>
<dbReference type="GO" id="GO:1904257">
    <property type="term" value="P:zinc ion import into Golgi lumen"/>
    <property type="evidence" value="ECO:0000316"/>
    <property type="project" value="PomBase"/>
</dbReference>
<dbReference type="GO" id="GO:0062111">
    <property type="term" value="P:zinc ion import into organelle"/>
    <property type="evidence" value="ECO:0000314"/>
    <property type="project" value="PomBase"/>
</dbReference>
<dbReference type="InterPro" id="IPR002524">
    <property type="entry name" value="Cation_efflux"/>
</dbReference>
<dbReference type="Pfam" id="PF01545">
    <property type="entry name" value="Cation_efflux"/>
    <property type="match status" value="1"/>
</dbReference>
<accession>O14329</accession>
<gene>
    <name type="primary">zrg17</name>
    <name type="ORF">SPBC16E9.14c</name>
</gene>
<comment type="function">
    <text evidence="3">Probable transporter involved in the regulation of zinc homeostasis.</text>
</comment>
<comment type="subunit">
    <text evidence="3">Interacts with cis4.</text>
</comment>
<comment type="subcellular location">
    <subcellularLocation>
        <location evidence="2">Cytoplasm</location>
    </subcellularLocation>
    <subcellularLocation>
        <location evidence="2">Nucleus membrane</location>
        <topology evidence="2">Multi-pass membrane protein</topology>
    </subcellularLocation>
</comment>
<comment type="disruption phenotype">
    <text evidence="4">Leads to sensitivity to camptothecin and DNA-damaging agents.</text>
</comment>
<comment type="similarity">
    <text evidence="5">Belongs to the cation diffusion facilitator (CDF) transporter (TC 2.A.4) family. SLC30A subfamily.</text>
</comment>
<sequence>MTQNHNIPTAIQIQNPINNNVSVTISDQLPKPSANNPNLLSVDTRPTHRKGHHHKHSLSHQYFLPPKNRQPLEIPASYPIPTFKETFAILTFPQKLKLTSSILFFLVAVGVLLSGDATILLTLSCSLIVEGVLIIINVWRETLDSFLVWRHTCLRYPFGMQQMELLVDFSFSILLIFLGMNLLKEPAEHAIEDWGNLHHAGDHEEETVHIHLTISLFASAIISGFALLLDHPSAHIRELNSRFFHGLTLVPSLILVLLLSLGYQVGSFLSHLLSLTIAVTALVNGFSIAKSLALMLLLTYSNKEKVFECVSLIKEDTRIDQLNYAAIWQPHYNTCIANIGLTVSGGEREQAAVREDIIRIIQKTVGSIFGAGVQPKWEISVDIQRA</sequence>
<reference key="1">
    <citation type="journal article" date="2002" name="Nature">
        <title>The genome sequence of Schizosaccharomyces pombe.</title>
        <authorList>
            <person name="Wood V."/>
            <person name="Gwilliam R."/>
            <person name="Rajandream M.A."/>
            <person name="Lyne M.H."/>
            <person name="Lyne R."/>
            <person name="Stewart A."/>
            <person name="Sgouros J.G."/>
            <person name="Peat N."/>
            <person name="Hayles J."/>
            <person name="Baker S.G."/>
            <person name="Basham D."/>
            <person name="Bowman S."/>
            <person name="Brooks K."/>
            <person name="Brown D."/>
            <person name="Brown S."/>
            <person name="Chillingworth T."/>
            <person name="Churcher C.M."/>
            <person name="Collins M."/>
            <person name="Connor R."/>
            <person name="Cronin A."/>
            <person name="Davis P."/>
            <person name="Feltwell T."/>
            <person name="Fraser A."/>
            <person name="Gentles S."/>
            <person name="Goble A."/>
            <person name="Hamlin N."/>
            <person name="Harris D.E."/>
            <person name="Hidalgo J."/>
            <person name="Hodgson G."/>
            <person name="Holroyd S."/>
            <person name="Hornsby T."/>
            <person name="Howarth S."/>
            <person name="Huckle E.J."/>
            <person name="Hunt S."/>
            <person name="Jagels K."/>
            <person name="James K.D."/>
            <person name="Jones L."/>
            <person name="Jones M."/>
            <person name="Leather S."/>
            <person name="McDonald S."/>
            <person name="McLean J."/>
            <person name="Mooney P."/>
            <person name="Moule S."/>
            <person name="Mungall K.L."/>
            <person name="Murphy L.D."/>
            <person name="Niblett D."/>
            <person name="Odell C."/>
            <person name="Oliver K."/>
            <person name="O'Neil S."/>
            <person name="Pearson D."/>
            <person name="Quail M.A."/>
            <person name="Rabbinowitsch E."/>
            <person name="Rutherford K.M."/>
            <person name="Rutter S."/>
            <person name="Saunders D."/>
            <person name="Seeger K."/>
            <person name="Sharp S."/>
            <person name="Skelton J."/>
            <person name="Simmonds M.N."/>
            <person name="Squares R."/>
            <person name="Squares S."/>
            <person name="Stevens K."/>
            <person name="Taylor K."/>
            <person name="Taylor R.G."/>
            <person name="Tivey A."/>
            <person name="Walsh S.V."/>
            <person name="Warren T."/>
            <person name="Whitehead S."/>
            <person name="Woodward J.R."/>
            <person name="Volckaert G."/>
            <person name="Aert R."/>
            <person name="Robben J."/>
            <person name="Grymonprez B."/>
            <person name="Weltjens I."/>
            <person name="Vanstreels E."/>
            <person name="Rieger M."/>
            <person name="Schaefer M."/>
            <person name="Mueller-Auer S."/>
            <person name="Gabel C."/>
            <person name="Fuchs M."/>
            <person name="Duesterhoeft A."/>
            <person name="Fritzc C."/>
            <person name="Holzer E."/>
            <person name="Moestl D."/>
            <person name="Hilbert H."/>
            <person name="Borzym K."/>
            <person name="Langer I."/>
            <person name="Beck A."/>
            <person name="Lehrach H."/>
            <person name="Reinhardt R."/>
            <person name="Pohl T.M."/>
            <person name="Eger P."/>
            <person name="Zimmermann W."/>
            <person name="Wedler H."/>
            <person name="Wambutt R."/>
            <person name="Purnelle B."/>
            <person name="Goffeau A."/>
            <person name="Cadieu E."/>
            <person name="Dreano S."/>
            <person name="Gloux S."/>
            <person name="Lelaure V."/>
            <person name="Mottier S."/>
            <person name="Galibert F."/>
            <person name="Aves S.J."/>
            <person name="Xiang Z."/>
            <person name="Hunt C."/>
            <person name="Moore K."/>
            <person name="Hurst S.M."/>
            <person name="Lucas M."/>
            <person name="Rochet M."/>
            <person name="Gaillardin C."/>
            <person name="Tallada V.A."/>
            <person name="Garzon A."/>
            <person name="Thode G."/>
            <person name="Daga R.R."/>
            <person name="Cruzado L."/>
            <person name="Jimenez J."/>
            <person name="Sanchez M."/>
            <person name="del Rey F."/>
            <person name="Benito J."/>
            <person name="Dominguez A."/>
            <person name="Revuelta J.L."/>
            <person name="Moreno S."/>
            <person name="Armstrong J."/>
            <person name="Forsburg S.L."/>
            <person name="Cerutti L."/>
            <person name="Lowe T."/>
            <person name="McCombie W.R."/>
            <person name="Paulsen I."/>
            <person name="Potashkin J."/>
            <person name="Shpakovski G.V."/>
            <person name="Ussery D."/>
            <person name="Barrell B.G."/>
            <person name="Nurse P."/>
        </authorList>
    </citation>
    <scope>NUCLEOTIDE SEQUENCE [LARGE SCALE GENOMIC DNA]</scope>
    <source>
        <strain>972 / ATCC 24843</strain>
    </source>
</reference>
<reference key="2">
    <citation type="journal article" date="2006" name="Nat. Biotechnol.">
        <title>ORFeome cloning and global analysis of protein localization in the fission yeast Schizosaccharomyces pombe.</title>
        <authorList>
            <person name="Matsuyama A."/>
            <person name="Arai R."/>
            <person name="Yashiroda Y."/>
            <person name="Shirai A."/>
            <person name="Kamata A."/>
            <person name="Sekido S."/>
            <person name="Kobayashi Y."/>
            <person name="Hashimoto A."/>
            <person name="Hamamoto M."/>
            <person name="Hiraoka Y."/>
            <person name="Horinouchi S."/>
            <person name="Yoshida M."/>
        </authorList>
    </citation>
    <scope>SUBCELLULAR LOCATION [LARGE SCALE ANALYSIS]</scope>
</reference>
<reference key="3">
    <citation type="journal article" date="2008" name="Mol. Biol. Cell">
        <title>Cation diffusion facilitator Cis4 is implicated in Golgi membrane trafficking via regulating zinc homeostasis in fission yeast.</title>
        <authorList>
            <person name="Fang Y."/>
            <person name="Sugiura R."/>
            <person name="Ma Y."/>
            <person name="Yada-Matsushima T."/>
            <person name="Umeno H."/>
            <person name="Kuno T."/>
        </authorList>
    </citation>
    <scope>FUNCTION</scope>
    <scope>INTERACTION WITH CIS4</scope>
</reference>
<reference key="4">
    <citation type="journal article" date="2010" name="Genome Biol.">
        <title>Global fitness profiling of fission yeast deletion strains by barcode sequencing.</title>
        <authorList>
            <person name="Han T.X."/>
            <person name="Xu X.Y."/>
            <person name="Zhang M.J."/>
            <person name="Peng X."/>
            <person name="Du L.L."/>
        </authorList>
    </citation>
    <scope>DISRUPTION PHENOTYPE</scope>
</reference>
<name>ZRG17_SCHPO</name>
<protein>
    <recommendedName>
        <fullName>Probable zinc transporter zrg17</fullName>
    </recommendedName>
</protein>
<feature type="chain" id="PRO_0000317147" description="Probable zinc transporter zrg17">
    <location>
        <begin position="1"/>
        <end position="386"/>
    </location>
</feature>
<feature type="transmembrane region" description="Helical" evidence="1">
    <location>
        <begin position="102"/>
        <end position="122"/>
    </location>
</feature>
<feature type="transmembrane region" description="Helical" evidence="1">
    <location>
        <begin position="128"/>
        <end position="148"/>
    </location>
</feature>
<feature type="transmembrane region" description="Helical" evidence="1">
    <location>
        <begin position="163"/>
        <end position="183"/>
    </location>
</feature>
<feature type="transmembrane region" description="Helical" evidence="1">
    <location>
        <begin position="208"/>
        <end position="228"/>
    </location>
</feature>
<feature type="transmembrane region" description="Helical" evidence="1">
    <location>
        <begin position="243"/>
        <end position="263"/>
    </location>
</feature>
<feature type="transmembrane region" description="Helical" evidence="1">
    <location>
        <begin position="268"/>
        <end position="288"/>
    </location>
</feature>
<proteinExistence type="evidence at protein level"/>
<keyword id="KW-0963">Cytoplasm</keyword>
<keyword id="KW-0406">Ion transport</keyword>
<keyword id="KW-0472">Membrane</keyword>
<keyword id="KW-0539">Nucleus</keyword>
<keyword id="KW-1185">Reference proteome</keyword>
<keyword id="KW-0812">Transmembrane</keyword>
<keyword id="KW-1133">Transmembrane helix</keyword>
<keyword id="KW-0813">Transport</keyword>
<keyword id="KW-0862">Zinc</keyword>
<keyword id="KW-0864">Zinc transport</keyword>
<organism>
    <name type="scientific">Schizosaccharomyces pombe (strain 972 / ATCC 24843)</name>
    <name type="common">Fission yeast</name>
    <dbReference type="NCBI Taxonomy" id="284812"/>
    <lineage>
        <taxon>Eukaryota</taxon>
        <taxon>Fungi</taxon>
        <taxon>Dikarya</taxon>
        <taxon>Ascomycota</taxon>
        <taxon>Taphrinomycotina</taxon>
        <taxon>Schizosaccharomycetes</taxon>
        <taxon>Schizosaccharomycetales</taxon>
        <taxon>Schizosaccharomycetaceae</taxon>
        <taxon>Schizosaccharomyces</taxon>
    </lineage>
</organism>